<feature type="chain" id="PRO_0000213742" description="Antitoxin RelJ">
    <location>
        <begin position="1"/>
        <end position="91"/>
    </location>
</feature>
<feature type="strand" evidence="5">
    <location>
        <begin position="2"/>
        <end position="4"/>
    </location>
</feature>
<feature type="helix" evidence="5">
    <location>
        <begin position="5"/>
        <end position="10"/>
    </location>
</feature>
<feature type="helix" evidence="5">
    <location>
        <begin position="12"/>
        <end position="22"/>
    </location>
</feature>
<feature type="strand" evidence="5">
    <location>
        <begin position="26"/>
        <end position="29"/>
    </location>
</feature>
<feature type="strand" evidence="5">
    <location>
        <begin position="35"/>
        <end position="39"/>
    </location>
</feature>
<feature type="helix" evidence="5">
    <location>
        <begin position="40"/>
        <end position="52"/>
    </location>
</feature>
<feature type="helix" evidence="5">
    <location>
        <begin position="56"/>
        <end position="66"/>
    </location>
</feature>
<feature type="helix" evidence="5">
    <location>
        <begin position="73"/>
        <end position="81"/>
    </location>
</feature>
<sequence>MSISASEARQRLFPLIEQVNTDHQPVRITSRAGDAVLMSADDYDAWQETVYLLRSPENARRLMEAVARDKAGHSAFTKSVDELREMAGGEE</sequence>
<organism>
    <name type="scientific">Mycobacterium tuberculosis (strain ATCC 25618 / H37Rv)</name>
    <dbReference type="NCBI Taxonomy" id="83332"/>
    <lineage>
        <taxon>Bacteria</taxon>
        <taxon>Bacillati</taxon>
        <taxon>Actinomycetota</taxon>
        <taxon>Actinomycetes</taxon>
        <taxon>Mycobacteriales</taxon>
        <taxon>Mycobacteriaceae</taxon>
        <taxon>Mycobacterium</taxon>
        <taxon>Mycobacterium tuberculosis complex</taxon>
    </lineage>
</organism>
<dbReference type="EMBL" id="AL123456">
    <property type="protein sequence ID" value="CCP46178.1"/>
    <property type="molecule type" value="Genomic_DNA"/>
</dbReference>
<dbReference type="PIR" id="D70970">
    <property type="entry name" value="D70970"/>
</dbReference>
<dbReference type="RefSeq" id="NP_217874.1">
    <property type="nucleotide sequence ID" value="NC_000962.3"/>
</dbReference>
<dbReference type="RefSeq" id="WP_003417757.1">
    <property type="nucleotide sequence ID" value="NZ_NVQJ01000052.1"/>
</dbReference>
<dbReference type="PDB" id="3CTO">
    <property type="method" value="X-ray"/>
    <property type="resolution" value="2.50 A"/>
    <property type="chains" value="A/B/C/D/E=1-91"/>
</dbReference>
<dbReference type="PDB" id="3D55">
    <property type="method" value="X-ray"/>
    <property type="resolution" value="2.13 A"/>
    <property type="chains" value="A/B/C/D=1-91"/>
</dbReference>
<dbReference type="PDB" id="3OEI">
    <property type="method" value="X-ray"/>
    <property type="resolution" value="2.14 A"/>
    <property type="chains" value="A/B/E/F/I/J/M/N=1-91"/>
</dbReference>
<dbReference type="PDBsum" id="3CTO"/>
<dbReference type="PDBsum" id="3D55"/>
<dbReference type="PDBsum" id="3OEI"/>
<dbReference type="SMR" id="P9WF25"/>
<dbReference type="FunCoup" id="P9WF25">
    <property type="interactions" value="1"/>
</dbReference>
<dbReference type="IntAct" id="P9WF25">
    <property type="interactions" value="2"/>
</dbReference>
<dbReference type="MINT" id="P9WF25"/>
<dbReference type="STRING" id="83332.Rv3357"/>
<dbReference type="PaxDb" id="83332-Rv3357"/>
<dbReference type="DNASU" id="888135"/>
<dbReference type="GeneID" id="45427356"/>
<dbReference type="GeneID" id="888135"/>
<dbReference type="KEGG" id="mtu:Rv3357"/>
<dbReference type="KEGG" id="mtv:RVBD_3357"/>
<dbReference type="TubercuList" id="Rv3357"/>
<dbReference type="eggNOG" id="COG2161">
    <property type="taxonomic scope" value="Bacteria"/>
</dbReference>
<dbReference type="InParanoid" id="P9WF25"/>
<dbReference type="OrthoDB" id="9802003at2"/>
<dbReference type="PhylomeDB" id="P9WF25"/>
<dbReference type="EvolutionaryTrace" id="P9WF25"/>
<dbReference type="Proteomes" id="UP000001584">
    <property type="component" value="Chromosome"/>
</dbReference>
<dbReference type="GO" id="GO:0003700">
    <property type="term" value="F:DNA-binding transcription factor activity"/>
    <property type="evidence" value="ECO:0000318"/>
    <property type="project" value="GO_Central"/>
</dbReference>
<dbReference type="GO" id="GO:0043565">
    <property type="term" value="F:sequence-specific DNA binding"/>
    <property type="evidence" value="ECO:0000318"/>
    <property type="project" value="GO_Central"/>
</dbReference>
<dbReference type="GO" id="GO:0006355">
    <property type="term" value="P:regulation of DNA-templated transcription"/>
    <property type="evidence" value="ECO:0000314"/>
    <property type="project" value="MTBBASE"/>
</dbReference>
<dbReference type="FunFam" id="3.40.1620.10:FF:000005">
    <property type="entry name" value="Antitoxin RelJ"/>
    <property type="match status" value="1"/>
</dbReference>
<dbReference type="Gene3D" id="1.10.1220.170">
    <property type="match status" value="1"/>
</dbReference>
<dbReference type="Gene3D" id="3.40.1620.10">
    <property type="entry name" value="YefM-like domain"/>
    <property type="match status" value="1"/>
</dbReference>
<dbReference type="InterPro" id="IPR006442">
    <property type="entry name" value="Antitoxin_Phd/YefM"/>
</dbReference>
<dbReference type="InterPro" id="IPR051405">
    <property type="entry name" value="phD/YefM_antitoxin"/>
</dbReference>
<dbReference type="InterPro" id="IPR036165">
    <property type="entry name" value="YefM-like_sf"/>
</dbReference>
<dbReference type="NCBIfam" id="TIGR01552">
    <property type="entry name" value="phd_fam"/>
    <property type="match status" value="1"/>
</dbReference>
<dbReference type="PANTHER" id="PTHR33713">
    <property type="entry name" value="ANTITOXIN YAFN-RELATED"/>
    <property type="match status" value="1"/>
</dbReference>
<dbReference type="PANTHER" id="PTHR33713:SF6">
    <property type="entry name" value="ANTITOXIN YEFM"/>
    <property type="match status" value="1"/>
</dbReference>
<dbReference type="Pfam" id="PF02604">
    <property type="entry name" value="PhdYeFM_antitox"/>
    <property type="match status" value="1"/>
</dbReference>
<dbReference type="SUPFAM" id="SSF143120">
    <property type="entry name" value="YefM-like"/>
    <property type="match status" value="1"/>
</dbReference>
<comment type="function">
    <text>Antitoxin component of a type II toxin-antitoxin (TA) system. A probable antitoxin for the putative mRNA interferase RelK. Upon expression in E.coli but not in M.smegmatis this protein neutralizes E.coli YoeB.</text>
</comment>
<comment type="function">
    <text>Binds to and represses its own promoter, in combination with RelK repression is somewhat lessened. Several DNA-protein complexes are formed in vitro depending on the RelJ:RelK ratio.</text>
</comment>
<comment type="subunit">
    <text evidence="1 3 4">Homodimer (Probable). May form RelJ(2)-RelK toxin-antitoxin complexes, in which the toxin is probably inactive.</text>
</comment>
<comment type="interaction">
    <interactant intactId="EBI-9354099">
        <id>P9WF25</id>
    </interactant>
    <interactant intactId="EBI-10091663">
        <id>P9WF09</id>
        <label>relK</label>
    </interactant>
    <organismsDiffer>false</organismsDiffer>
    <experiments>4</experiments>
</comment>
<comment type="interaction">
    <interactant intactId="EBI-9354099">
        <id>P9WF25</id>
    </interactant>
    <interactant intactId="EBI-10091643">
        <id>I6Y1Q2</id>
        <label>sirR</label>
    </interactant>
    <organismsDiffer>false</organismsDiffer>
    <experiments>3</experiments>
</comment>
<comment type="induction">
    <text evidence="2">Expressed in log phase cells. A member of the relJK operon.</text>
</comment>
<comment type="similarity">
    <text evidence="4">Belongs to the phD/YefM antitoxin family.</text>
</comment>
<gene>
    <name type="primary">relJ</name>
    <name type="synonym">relB3</name>
    <name type="synonym">yefM</name>
    <name type="ordered locus">Rv3357</name>
    <name type="ORF">MTV004.14</name>
</gene>
<proteinExistence type="evidence at protein level"/>
<protein>
    <recommendedName>
        <fullName>Antitoxin RelJ</fullName>
    </recommendedName>
    <alternativeName>
        <fullName>Antitoxin YefM</fullName>
    </alternativeName>
</protein>
<reference key="1">
    <citation type="journal article" date="1998" name="Nature">
        <title>Deciphering the biology of Mycobacterium tuberculosis from the complete genome sequence.</title>
        <authorList>
            <person name="Cole S.T."/>
            <person name="Brosch R."/>
            <person name="Parkhill J."/>
            <person name="Garnier T."/>
            <person name="Churcher C.M."/>
            <person name="Harris D.E."/>
            <person name="Gordon S.V."/>
            <person name="Eiglmeier K."/>
            <person name="Gas S."/>
            <person name="Barry C.E. III"/>
            <person name="Tekaia F."/>
            <person name="Badcock K."/>
            <person name="Basham D."/>
            <person name="Brown D."/>
            <person name="Chillingworth T."/>
            <person name="Connor R."/>
            <person name="Davies R.M."/>
            <person name="Devlin K."/>
            <person name="Feltwell T."/>
            <person name="Gentles S."/>
            <person name="Hamlin N."/>
            <person name="Holroyd S."/>
            <person name="Hornsby T."/>
            <person name="Jagels K."/>
            <person name="Krogh A."/>
            <person name="McLean J."/>
            <person name="Moule S."/>
            <person name="Murphy L.D."/>
            <person name="Oliver S."/>
            <person name="Osborne J."/>
            <person name="Quail M.A."/>
            <person name="Rajandream M.A."/>
            <person name="Rogers J."/>
            <person name="Rutter S."/>
            <person name="Seeger K."/>
            <person name="Skelton S."/>
            <person name="Squares S."/>
            <person name="Squares R."/>
            <person name="Sulston J.E."/>
            <person name="Taylor K."/>
            <person name="Whitehead S."/>
            <person name="Barrell B.G."/>
        </authorList>
    </citation>
    <scope>NUCLEOTIDE SEQUENCE [LARGE SCALE GENOMIC DNA]</scope>
    <source>
        <strain>ATCC 25618 / H37Rv</strain>
    </source>
</reference>
<reference key="2">
    <citation type="journal article" date="2009" name="J. Bacteriol.">
        <title>Three Mycobacterium tuberculosis Rel toxin-antitoxin modules inhibit mycobacterial growth and are expressed in infected human macrophages.</title>
        <authorList>
            <person name="Korch S.B."/>
            <person name="Contreras H."/>
            <person name="Clark-Curtiss J.E."/>
        </authorList>
    </citation>
    <scope>FUNCTION AS AN ANTITOXIN</scope>
    <scope>FUNCTION AS A TRANSCRIPTIONAL REGULATOR</scope>
    <scope>EXPRESSION IN M.SMEGMATIS</scope>
    <scope>INDUCTION</scope>
    <scope>OPERON STRUCTURE</scope>
    <source>
        <strain>ATCC 25618 / H37Rv</strain>
    </source>
</reference>
<reference key="3">
    <citation type="journal article" date="2009" name="PLoS Genet.">
        <title>Comprehensive functional analysis of Mycobacterium tuberculosis toxin-antitoxin systems: implications for pathogenesis, stress responses, and evolution.</title>
        <authorList>
            <person name="Ramage H.R."/>
            <person name="Connolly L.E."/>
            <person name="Cox J.S."/>
        </authorList>
    </citation>
    <scope>EXPRESSION IN M.SMEGMATIS</scope>
    <scope>LACK OF FUNCTION AS AN ANTITOXIN</scope>
    <source>
        <strain>ATCC 35801 / TMC 107 / Erdman</strain>
    </source>
</reference>
<reference key="4">
    <citation type="journal article" date="2010" name="PLoS ONE">
        <title>Characterization of the interaction and cross-regulation of three Mycobacterium tuberculosis RelBE modules.</title>
        <authorList>
            <person name="Yang M."/>
            <person name="Gao C."/>
            <person name="Wang Y."/>
            <person name="Zhang H."/>
            <person name="He Z.G."/>
        </authorList>
    </citation>
    <scope>FUNCTION AS AN ANTITOXIN</scope>
    <scope>SUBUNIT</scope>
    <scope>DNA-BINDING</scope>
    <source>
        <strain>ATCC 25618 / H37Rv</strain>
    </source>
</reference>
<reference key="5">
    <citation type="journal article" date="2011" name="Mol. Cell. Proteomics">
        <title>Proteogenomic analysis of Mycobacterium tuberculosis by high resolution mass spectrometry.</title>
        <authorList>
            <person name="Kelkar D.S."/>
            <person name="Kumar D."/>
            <person name="Kumar P."/>
            <person name="Balakrishnan L."/>
            <person name="Muthusamy B."/>
            <person name="Yadav A.K."/>
            <person name="Shrivastava P."/>
            <person name="Marimuthu A."/>
            <person name="Anand S."/>
            <person name="Sundaram H."/>
            <person name="Kingsbury R."/>
            <person name="Harsha H.C."/>
            <person name="Nair B."/>
            <person name="Prasad T.S."/>
            <person name="Chauhan D.S."/>
            <person name="Katoch K."/>
            <person name="Katoch V.M."/>
            <person name="Kumar P."/>
            <person name="Chaerkady R."/>
            <person name="Ramachandran S."/>
            <person name="Dash D."/>
            <person name="Pandey A."/>
        </authorList>
    </citation>
    <scope>IDENTIFICATION BY MASS SPECTROMETRY [LARGE SCALE ANALYSIS]</scope>
    <source>
        <strain>ATCC 25618 / H37Rv</strain>
    </source>
</reference>
<reference key="6">
    <citation type="journal article" date="2008" name="J. Mol. Biol.">
        <title>Crystal structure of Mycobacterium tuberculosis YefM antitoxin reveals that it is not an intrinsically unstructured protein.</title>
        <authorList>
            <person name="Kumar P."/>
            <person name="Issac B."/>
            <person name="Dodson E.J."/>
            <person name="Turkenburg J.P."/>
            <person name="Mande S.C."/>
        </authorList>
    </citation>
    <scope>X-RAY CRYSTALLOGRAPHY (2.13 ANGSTROMS)</scope>
    <scope>SUBUNIT</scope>
    <scope>FUNCTION AS AN ANTITOXIN IN E.COLI</scope>
    <source>
        <strain>ATCC 25618 / H37Rv</strain>
    </source>
</reference>
<accession>P9WF25</accession>
<accession>L0TCA7</accession>
<accession>O50386</accession>
<accession>P65067</accession>
<keyword id="KW-0002">3D-structure</keyword>
<keyword id="KW-0238">DNA-binding</keyword>
<keyword id="KW-1185">Reference proteome</keyword>
<keyword id="KW-0678">Repressor</keyword>
<keyword id="KW-1277">Toxin-antitoxin system</keyword>
<keyword id="KW-0804">Transcription</keyword>
<keyword id="KW-0805">Transcription regulation</keyword>
<evidence type="ECO:0000269" key="1">
    <source>
    </source>
</evidence>
<evidence type="ECO:0000269" key="2">
    <source>
    </source>
</evidence>
<evidence type="ECO:0000269" key="3">
    <source>
    </source>
</evidence>
<evidence type="ECO:0000305" key="4"/>
<evidence type="ECO:0007829" key="5">
    <source>
        <dbReference type="PDB" id="3D55"/>
    </source>
</evidence>
<name>RELJ_MYCTU</name>